<protein>
    <recommendedName>
        <fullName evidence="5">2S seed storage albumin protein</fullName>
    </recommendedName>
    <alternativeName>
        <fullName evidence="4">2S albumin</fullName>
    </alternativeName>
    <alternativeName>
        <fullName evidence="4">To-A1</fullName>
    </alternativeName>
    <component>
        <recommendedName>
            <fullName evidence="4">2S albumin small chain</fullName>
        </recommendedName>
    </component>
    <component>
        <recommendedName>
            <fullName evidence="4">2S albumin large chain</fullName>
        </recommendedName>
    </component>
</protein>
<name>2SS_TAROF</name>
<sequence length="44" mass="5163">PVSRQQCSQRIQGERFNQCRSQMQDGQLQSCCQELQNVEEQCQC</sequence>
<organism>
    <name type="scientific">Taraxacum officinale</name>
    <name type="common">Common dandelion</name>
    <name type="synonym">Leontodon taraxacum</name>
    <dbReference type="NCBI Taxonomy" id="50225"/>
    <lineage>
        <taxon>Eukaryota</taxon>
        <taxon>Viridiplantae</taxon>
        <taxon>Streptophyta</taxon>
        <taxon>Embryophyta</taxon>
        <taxon>Tracheophyta</taxon>
        <taxon>Spermatophyta</taxon>
        <taxon>Magnoliopsida</taxon>
        <taxon>eudicotyledons</taxon>
        <taxon>Gunneridae</taxon>
        <taxon>Pentapetalae</taxon>
        <taxon>asterids</taxon>
        <taxon>campanulids</taxon>
        <taxon>Asterales</taxon>
        <taxon>Asteraceae</taxon>
        <taxon>Cichorioideae</taxon>
        <taxon>Cichorieae</taxon>
        <taxon>Crepidinae</taxon>
        <taxon>Taraxacum</taxon>
    </lineage>
</organism>
<proteinExistence type="evidence at protein level"/>
<feature type="chain" id="PRO_0000399754" description="2S albumin small chain" evidence="3">
    <location>
        <begin position="1"/>
        <end position="19" status="greater than"/>
    </location>
</feature>
<feature type="chain" id="PRO_0000399755" description="2S albumin large chain" evidence="3">
    <location>
        <begin position="20"/>
        <end position="44" status="greater than"/>
    </location>
</feature>
<feature type="disulfide bond" description="Interchain (between small and large chains)" evidence="1">
    <location>
        <begin position="7"/>
        <end position="42"/>
    </location>
</feature>
<feature type="disulfide bond" description="Interchain (between small and large chains)" evidence="1">
    <location>
        <begin position="19"/>
        <end position="31"/>
    </location>
</feature>
<feature type="disulfide bond" evidence="1">
    <location>
        <begin position="32"/>
        <end status="unknown"/>
    </location>
</feature>
<feature type="non-consecutive residues" evidence="4">
    <location>
        <begin position="19"/>
        <end position="20"/>
    </location>
</feature>
<feature type="non-terminal residue" evidence="4">
    <location>
        <position position="44"/>
    </location>
</feature>
<accession>P86783</accession>
<evidence type="ECO:0000250" key="1">
    <source>
        <dbReference type="UniProtKB" id="P01089"/>
    </source>
</evidence>
<evidence type="ECO:0000255" key="2"/>
<evidence type="ECO:0000269" key="3">
    <source>
    </source>
</evidence>
<evidence type="ECO:0000303" key="4">
    <source>
    </source>
</evidence>
<evidence type="ECO:0000305" key="5"/>
<dbReference type="SMR" id="P86783"/>
<dbReference type="GO" id="GO:0045735">
    <property type="term" value="F:nutrient reservoir activity"/>
    <property type="evidence" value="ECO:0007669"/>
    <property type="project" value="UniProtKB-KW"/>
</dbReference>
<dbReference type="GO" id="GO:0050832">
    <property type="term" value="P:defense response to fungus"/>
    <property type="evidence" value="ECO:0000314"/>
    <property type="project" value="UniProtKB"/>
</dbReference>
<dbReference type="GO" id="GO:0002229">
    <property type="term" value="P:defense response to oomycetes"/>
    <property type="evidence" value="ECO:0000314"/>
    <property type="project" value="UniProtKB"/>
</dbReference>
<dbReference type="GO" id="GO:0031640">
    <property type="term" value="P:killing of cells of another organism"/>
    <property type="evidence" value="ECO:0007669"/>
    <property type="project" value="UniProtKB-KW"/>
</dbReference>
<dbReference type="InterPro" id="IPR036312">
    <property type="entry name" value="Bifun_inhib/LTP/seed_sf"/>
</dbReference>
<dbReference type="SUPFAM" id="SSF47699">
    <property type="entry name" value="Bifunctional inhibitor/lipid-transfer protein/seed storage 2S albumin"/>
    <property type="match status" value="1"/>
</dbReference>
<keyword id="KW-0929">Antimicrobial</keyword>
<keyword id="KW-0903">Direct protein sequencing</keyword>
<keyword id="KW-1015">Disulfide bond</keyword>
<keyword id="KW-0295">Fungicide</keyword>
<keyword id="KW-0708">Seed storage protein</keyword>
<keyword id="KW-0758">Storage protein</keyword>
<comment type="function">
    <text evidence="3">This is a 2S seed storage protein. Has antifungal activity. Inhibits spore germination in H.sativum (IC(50)=62.5 ug/ml) and P.betae (IC(50)=62.5 ug/ml). Inhibits growth of H.sativum, V.albo-atrum and P.infestans.</text>
</comment>
<comment type="subunit">
    <text evidence="1 3">The mature protein consists of a small and a large chain linked by 2 disulfide bonds.</text>
</comment>
<comment type="mass spectrometry" mass="9631.0" method="MALDI" evidence="3">
    <molecule>2S albumin small chain</molecule>
    <text>Small chain.</text>
</comment>
<comment type="mass spectrometry" mass="4368.0" method="MALDI" evidence="3">
    <molecule>2S albumin large chain</molecule>
    <text>Large chain.</text>
</comment>
<comment type="similarity">
    <text evidence="2">Belongs to the 2S seed storage albumins family.</text>
</comment>
<reference evidence="5" key="1">
    <citation type="journal article" date="2010" name="Protein Pept. Lett.">
        <title>Antifungal activity of storage 2S albumins from seeds of the invasive weed dandelion Taraxacum officinale Wigg.</title>
        <authorList>
            <person name="Odintsova T.I."/>
            <person name="Rogozhin E.A."/>
            <person name="Sklyar I.V."/>
            <person name="Musolyamov A.K."/>
            <person name="Kudryavtsev A.M."/>
            <person name="Pukhalsky V.A."/>
            <person name="Smirnov A.N."/>
            <person name="Grishin E.V."/>
            <person name="Egorov T.A."/>
        </authorList>
    </citation>
    <scope>PROTEIN SEQUENCE</scope>
    <scope>FUNCTION</scope>
    <scope>SUBUNIT</scope>
    <scope>MASS SPECTROMETRY</scope>
    <source>
        <tissue evidence="3">Seed</tissue>
    </source>
</reference>